<sequence>MADLLGSILSSMEKPPSLGDQESRRKAREQAARLKKLQEQDKQQKVEFRKRMEKEVSDFIQDSGQVKKKFQPMNKIERSILHDVVEVAGLTSFSFGEDDDCRYVMIFKKEFAPSDEELDSYRHGEEWDPQKAEEKRKLKELAQKQEEEAAQQGPAVVSPASDYKDKYSHLIGKGAAKDAAHMLQANKTYGCVPVANKRDTRSIEEAMNEIRAKKRLRQSGEELPTTS</sequence>
<dbReference type="EMBL" id="AK042294">
    <property type="protein sequence ID" value="BAE20629.1"/>
    <property type="molecule type" value="mRNA"/>
</dbReference>
<dbReference type="EMBL" id="AK077543">
    <property type="protein sequence ID" value="BAC36855.1"/>
    <property type="molecule type" value="mRNA"/>
</dbReference>
<dbReference type="EMBL" id="AK166184">
    <property type="protein sequence ID" value="BAE38615.1"/>
    <property type="molecule type" value="mRNA"/>
</dbReference>
<dbReference type="EMBL" id="AL596117">
    <property type="status" value="NOT_ANNOTATED_CDS"/>
    <property type="molecule type" value="Genomic_DNA"/>
</dbReference>
<dbReference type="EMBL" id="BC046751">
    <property type="protein sequence ID" value="AAH46751.1"/>
    <property type="molecule type" value="mRNA"/>
</dbReference>
<dbReference type="EMBL" id="BC055821">
    <property type="protein sequence ID" value="AAH55821.1"/>
    <property type="molecule type" value="mRNA"/>
</dbReference>
<dbReference type="CCDS" id="CCDS24962.1"/>
<dbReference type="RefSeq" id="NP_001161141.1">
    <property type="nucleotide sequence ID" value="NM_001167669.1"/>
</dbReference>
<dbReference type="RefSeq" id="NP_766149.2">
    <property type="nucleotide sequence ID" value="NM_172561.3"/>
</dbReference>
<dbReference type="SMR" id="Q7TNE3"/>
<dbReference type="BioGRID" id="229814">
    <property type="interactions" value="2"/>
</dbReference>
<dbReference type="FunCoup" id="Q7TNE3">
    <property type="interactions" value="1119"/>
</dbReference>
<dbReference type="STRING" id="10090.ENSMUSP00000018431"/>
<dbReference type="GlyGen" id="Q7TNE3">
    <property type="glycosylation" value="2 sites, 1 O-linked glycan (2 sites)"/>
</dbReference>
<dbReference type="iPTMnet" id="Q7TNE3"/>
<dbReference type="PhosphoSitePlus" id="Q7TNE3"/>
<dbReference type="SwissPalm" id="Q7TNE3"/>
<dbReference type="jPOST" id="Q7TNE3"/>
<dbReference type="PaxDb" id="10090-ENSMUSP00000018431"/>
<dbReference type="PeptideAtlas" id="Q7TNE3"/>
<dbReference type="ProteomicsDB" id="261560"/>
<dbReference type="Pumba" id="Q7TNE3"/>
<dbReference type="Antibodypedia" id="5775">
    <property type="antibodies" value="75 antibodies from 21 providers"/>
</dbReference>
<dbReference type="Ensembl" id="ENSMUST00000018431.13">
    <property type="protein sequence ID" value="ENSMUSP00000018431.7"/>
    <property type="gene ID" value="ENSMUSG00000018287.13"/>
</dbReference>
<dbReference type="GeneID" id="216873"/>
<dbReference type="KEGG" id="mmu:216873"/>
<dbReference type="UCSC" id="uc007jvz.2">
    <property type="organism name" value="mouse"/>
</dbReference>
<dbReference type="AGR" id="MGI:107380"/>
<dbReference type="CTD" id="9552"/>
<dbReference type="MGI" id="MGI:107380">
    <property type="gene designation" value="Spag7"/>
</dbReference>
<dbReference type="VEuPathDB" id="HostDB:ENSMUSG00000018287"/>
<dbReference type="eggNOG" id="ENOG502QW1E">
    <property type="taxonomic scope" value="Eukaryota"/>
</dbReference>
<dbReference type="GeneTree" id="ENSGT00390000001520"/>
<dbReference type="HOGENOM" id="CLU_091198_0_0_1"/>
<dbReference type="InParanoid" id="Q7TNE3"/>
<dbReference type="OMA" id="NQSYGFV"/>
<dbReference type="OrthoDB" id="5979509at2759"/>
<dbReference type="PhylomeDB" id="Q7TNE3"/>
<dbReference type="TreeFam" id="TF323631"/>
<dbReference type="BioGRID-ORCS" id="216873">
    <property type="hits" value="7 hits in 77 CRISPR screens"/>
</dbReference>
<dbReference type="ChiTaRS" id="Spag7">
    <property type="organism name" value="mouse"/>
</dbReference>
<dbReference type="PRO" id="PR:Q7TNE3"/>
<dbReference type="Proteomes" id="UP000000589">
    <property type="component" value="Chromosome 11"/>
</dbReference>
<dbReference type="RNAct" id="Q7TNE3">
    <property type="molecule type" value="protein"/>
</dbReference>
<dbReference type="Bgee" id="ENSMUSG00000018287">
    <property type="expression patterns" value="Expressed in retinal neural layer and 265 other cell types or tissues"/>
</dbReference>
<dbReference type="ExpressionAtlas" id="Q7TNE3">
    <property type="expression patterns" value="baseline and differential"/>
</dbReference>
<dbReference type="GO" id="GO:0005634">
    <property type="term" value="C:nucleus"/>
    <property type="evidence" value="ECO:0007669"/>
    <property type="project" value="UniProtKB-SubCell"/>
</dbReference>
<dbReference type="GO" id="GO:0003676">
    <property type="term" value="F:nucleic acid binding"/>
    <property type="evidence" value="ECO:0007669"/>
    <property type="project" value="InterPro"/>
</dbReference>
<dbReference type="CDD" id="cd02636">
    <property type="entry name" value="R3H_sperm-antigen"/>
    <property type="match status" value="1"/>
</dbReference>
<dbReference type="Gene3D" id="3.30.1370.50">
    <property type="entry name" value="R3H-like domain"/>
    <property type="match status" value="1"/>
</dbReference>
<dbReference type="InterPro" id="IPR001374">
    <property type="entry name" value="R3H_dom"/>
</dbReference>
<dbReference type="InterPro" id="IPR036867">
    <property type="entry name" value="R3H_dom_sf"/>
</dbReference>
<dbReference type="InterPro" id="IPR034068">
    <property type="entry name" value="R3H_sperm-antigen"/>
</dbReference>
<dbReference type="InterPro" id="IPR017330">
    <property type="entry name" value="SPAG7"/>
</dbReference>
<dbReference type="PANTHER" id="PTHR13498">
    <property type="entry name" value="SPERM ASSOCIATED ANTIGEN 7"/>
    <property type="match status" value="1"/>
</dbReference>
<dbReference type="PANTHER" id="PTHR13498:SF3">
    <property type="entry name" value="SPERM-ASSOCIATED ANTIGEN 7"/>
    <property type="match status" value="1"/>
</dbReference>
<dbReference type="Pfam" id="PF01424">
    <property type="entry name" value="R3H"/>
    <property type="match status" value="1"/>
</dbReference>
<dbReference type="PIRSF" id="PIRSF037943">
    <property type="entry name" value="Sperm-assoc_antigen_PAG7"/>
    <property type="match status" value="1"/>
</dbReference>
<dbReference type="SMART" id="SM00393">
    <property type="entry name" value="R3H"/>
    <property type="match status" value="1"/>
</dbReference>
<dbReference type="SUPFAM" id="SSF82708">
    <property type="entry name" value="R3H domain"/>
    <property type="match status" value="1"/>
</dbReference>
<dbReference type="PROSITE" id="PS51061">
    <property type="entry name" value="R3H"/>
    <property type="match status" value="1"/>
</dbReference>
<proteinExistence type="evidence at protein level"/>
<feature type="initiator methionine" description="Removed" evidence="1">
    <location>
        <position position="1"/>
    </location>
</feature>
<feature type="chain" id="PRO_0000072098" description="Sperm-associated antigen 7">
    <location>
        <begin position="2"/>
        <end position="227"/>
    </location>
</feature>
<feature type="domain" description="R3H" evidence="3">
    <location>
        <begin position="46"/>
        <end position="109"/>
    </location>
</feature>
<feature type="region of interest" description="Disordered" evidence="4">
    <location>
        <begin position="1"/>
        <end position="45"/>
    </location>
</feature>
<feature type="region of interest" description="Disordered" evidence="4">
    <location>
        <begin position="118"/>
        <end position="161"/>
    </location>
</feature>
<feature type="short sequence motif" description="Nuclear localization signal" evidence="2">
    <location>
        <begin position="35"/>
        <end position="51"/>
    </location>
</feature>
<feature type="short sequence motif" description="Nuclear localization signal" evidence="2">
    <location>
        <begin position="122"/>
        <end position="139"/>
    </location>
</feature>
<feature type="compositionally biased region" description="Basic and acidic residues" evidence="4">
    <location>
        <begin position="21"/>
        <end position="45"/>
    </location>
</feature>
<feature type="compositionally biased region" description="Basic and acidic residues" evidence="4">
    <location>
        <begin position="119"/>
        <end position="147"/>
    </location>
</feature>
<feature type="modified residue" description="N-acetylalanine" evidence="1">
    <location>
        <position position="2"/>
    </location>
</feature>
<feature type="modified residue" description="Phosphoserine" evidence="6 7">
    <location>
        <position position="114"/>
    </location>
</feature>
<feature type="modified residue" description="Phosphoserine" evidence="1">
    <location>
        <position position="158"/>
    </location>
</feature>
<feature type="modified residue" description="Phosphoserine" evidence="7">
    <location>
        <position position="202"/>
    </location>
</feature>
<feature type="sequence conflict" description="In Ref. 1; BAC36855." evidence="5" ref="1">
    <original>Y</original>
    <variation>N</variation>
    <location>
        <position position="163"/>
    </location>
</feature>
<evidence type="ECO:0000250" key="1">
    <source>
        <dbReference type="UniProtKB" id="O75391"/>
    </source>
</evidence>
<evidence type="ECO:0000255" key="2"/>
<evidence type="ECO:0000255" key="3">
    <source>
        <dbReference type="PROSITE-ProRule" id="PRU00382"/>
    </source>
</evidence>
<evidence type="ECO:0000256" key="4">
    <source>
        <dbReference type="SAM" id="MobiDB-lite"/>
    </source>
</evidence>
<evidence type="ECO:0000305" key="5"/>
<evidence type="ECO:0007744" key="6">
    <source>
    </source>
</evidence>
<evidence type="ECO:0007744" key="7">
    <source>
    </source>
</evidence>
<reference key="1">
    <citation type="journal article" date="2005" name="Science">
        <title>The transcriptional landscape of the mammalian genome.</title>
        <authorList>
            <person name="Carninci P."/>
            <person name="Kasukawa T."/>
            <person name="Katayama S."/>
            <person name="Gough J."/>
            <person name="Frith M.C."/>
            <person name="Maeda N."/>
            <person name="Oyama R."/>
            <person name="Ravasi T."/>
            <person name="Lenhard B."/>
            <person name="Wells C."/>
            <person name="Kodzius R."/>
            <person name="Shimokawa K."/>
            <person name="Bajic V.B."/>
            <person name="Brenner S.E."/>
            <person name="Batalov S."/>
            <person name="Forrest A.R."/>
            <person name="Zavolan M."/>
            <person name="Davis M.J."/>
            <person name="Wilming L.G."/>
            <person name="Aidinis V."/>
            <person name="Allen J.E."/>
            <person name="Ambesi-Impiombato A."/>
            <person name="Apweiler R."/>
            <person name="Aturaliya R.N."/>
            <person name="Bailey T.L."/>
            <person name="Bansal M."/>
            <person name="Baxter L."/>
            <person name="Beisel K.W."/>
            <person name="Bersano T."/>
            <person name="Bono H."/>
            <person name="Chalk A.M."/>
            <person name="Chiu K.P."/>
            <person name="Choudhary V."/>
            <person name="Christoffels A."/>
            <person name="Clutterbuck D.R."/>
            <person name="Crowe M.L."/>
            <person name="Dalla E."/>
            <person name="Dalrymple B.P."/>
            <person name="de Bono B."/>
            <person name="Della Gatta G."/>
            <person name="di Bernardo D."/>
            <person name="Down T."/>
            <person name="Engstrom P."/>
            <person name="Fagiolini M."/>
            <person name="Faulkner G."/>
            <person name="Fletcher C.F."/>
            <person name="Fukushima T."/>
            <person name="Furuno M."/>
            <person name="Futaki S."/>
            <person name="Gariboldi M."/>
            <person name="Georgii-Hemming P."/>
            <person name="Gingeras T.R."/>
            <person name="Gojobori T."/>
            <person name="Green R.E."/>
            <person name="Gustincich S."/>
            <person name="Harbers M."/>
            <person name="Hayashi Y."/>
            <person name="Hensch T.K."/>
            <person name="Hirokawa N."/>
            <person name="Hill D."/>
            <person name="Huminiecki L."/>
            <person name="Iacono M."/>
            <person name="Ikeo K."/>
            <person name="Iwama A."/>
            <person name="Ishikawa T."/>
            <person name="Jakt M."/>
            <person name="Kanapin A."/>
            <person name="Katoh M."/>
            <person name="Kawasawa Y."/>
            <person name="Kelso J."/>
            <person name="Kitamura H."/>
            <person name="Kitano H."/>
            <person name="Kollias G."/>
            <person name="Krishnan S.P."/>
            <person name="Kruger A."/>
            <person name="Kummerfeld S.K."/>
            <person name="Kurochkin I.V."/>
            <person name="Lareau L.F."/>
            <person name="Lazarevic D."/>
            <person name="Lipovich L."/>
            <person name="Liu J."/>
            <person name="Liuni S."/>
            <person name="McWilliam S."/>
            <person name="Madan Babu M."/>
            <person name="Madera M."/>
            <person name="Marchionni L."/>
            <person name="Matsuda H."/>
            <person name="Matsuzawa S."/>
            <person name="Miki H."/>
            <person name="Mignone F."/>
            <person name="Miyake S."/>
            <person name="Morris K."/>
            <person name="Mottagui-Tabar S."/>
            <person name="Mulder N."/>
            <person name="Nakano N."/>
            <person name="Nakauchi H."/>
            <person name="Ng P."/>
            <person name="Nilsson R."/>
            <person name="Nishiguchi S."/>
            <person name="Nishikawa S."/>
            <person name="Nori F."/>
            <person name="Ohara O."/>
            <person name="Okazaki Y."/>
            <person name="Orlando V."/>
            <person name="Pang K.C."/>
            <person name="Pavan W.J."/>
            <person name="Pavesi G."/>
            <person name="Pesole G."/>
            <person name="Petrovsky N."/>
            <person name="Piazza S."/>
            <person name="Reed J."/>
            <person name="Reid J.F."/>
            <person name="Ring B.Z."/>
            <person name="Ringwald M."/>
            <person name="Rost B."/>
            <person name="Ruan Y."/>
            <person name="Salzberg S.L."/>
            <person name="Sandelin A."/>
            <person name="Schneider C."/>
            <person name="Schoenbach C."/>
            <person name="Sekiguchi K."/>
            <person name="Semple C.A."/>
            <person name="Seno S."/>
            <person name="Sessa L."/>
            <person name="Sheng Y."/>
            <person name="Shibata Y."/>
            <person name="Shimada H."/>
            <person name="Shimada K."/>
            <person name="Silva D."/>
            <person name="Sinclair B."/>
            <person name="Sperling S."/>
            <person name="Stupka E."/>
            <person name="Sugiura K."/>
            <person name="Sultana R."/>
            <person name="Takenaka Y."/>
            <person name="Taki K."/>
            <person name="Tammoja K."/>
            <person name="Tan S.L."/>
            <person name="Tang S."/>
            <person name="Taylor M.S."/>
            <person name="Tegner J."/>
            <person name="Teichmann S.A."/>
            <person name="Ueda H.R."/>
            <person name="van Nimwegen E."/>
            <person name="Verardo R."/>
            <person name="Wei C.L."/>
            <person name="Yagi K."/>
            <person name="Yamanishi H."/>
            <person name="Zabarovsky E."/>
            <person name="Zhu S."/>
            <person name="Zimmer A."/>
            <person name="Hide W."/>
            <person name="Bult C."/>
            <person name="Grimmond S.M."/>
            <person name="Teasdale R.D."/>
            <person name="Liu E.T."/>
            <person name="Brusic V."/>
            <person name="Quackenbush J."/>
            <person name="Wahlestedt C."/>
            <person name="Mattick J.S."/>
            <person name="Hume D.A."/>
            <person name="Kai C."/>
            <person name="Sasaki D."/>
            <person name="Tomaru Y."/>
            <person name="Fukuda S."/>
            <person name="Kanamori-Katayama M."/>
            <person name="Suzuki M."/>
            <person name="Aoki J."/>
            <person name="Arakawa T."/>
            <person name="Iida J."/>
            <person name="Imamura K."/>
            <person name="Itoh M."/>
            <person name="Kato T."/>
            <person name="Kawaji H."/>
            <person name="Kawagashira N."/>
            <person name="Kawashima T."/>
            <person name="Kojima M."/>
            <person name="Kondo S."/>
            <person name="Konno H."/>
            <person name="Nakano K."/>
            <person name="Ninomiya N."/>
            <person name="Nishio T."/>
            <person name="Okada M."/>
            <person name="Plessy C."/>
            <person name="Shibata K."/>
            <person name="Shiraki T."/>
            <person name="Suzuki S."/>
            <person name="Tagami M."/>
            <person name="Waki K."/>
            <person name="Watahiki A."/>
            <person name="Okamura-Oho Y."/>
            <person name="Suzuki H."/>
            <person name="Kawai J."/>
            <person name="Hayashizaki Y."/>
        </authorList>
    </citation>
    <scope>NUCLEOTIDE SEQUENCE [LARGE SCALE MRNA]</scope>
    <source>
        <strain>C57BL/6J</strain>
        <tissue>Embryo</tissue>
        <tissue>Thymus</tissue>
    </source>
</reference>
<reference key="2">
    <citation type="journal article" date="2009" name="PLoS Biol.">
        <title>Lineage-specific biology revealed by a finished genome assembly of the mouse.</title>
        <authorList>
            <person name="Church D.M."/>
            <person name="Goodstadt L."/>
            <person name="Hillier L.W."/>
            <person name="Zody M.C."/>
            <person name="Goldstein S."/>
            <person name="She X."/>
            <person name="Bult C.J."/>
            <person name="Agarwala R."/>
            <person name="Cherry J.L."/>
            <person name="DiCuccio M."/>
            <person name="Hlavina W."/>
            <person name="Kapustin Y."/>
            <person name="Meric P."/>
            <person name="Maglott D."/>
            <person name="Birtle Z."/>
            <person name="Marques A.C."/>
            <person name="Graves T."/>
            <person name="Zhou S."/>
            <person name="Teague B."/>
            <person name="Potamousis K."/>
            <person name="Churas C."/>
            <person name="Place M."/>
            <person name="Herschleb J."/>
            <person name="Runnheim R."/>
            <person name="Forrest D."/>
            <person name="Amos-Landgraf J."/>
            <person name="Schwartz D.C."/>
            <person name="Cheng Z."/>
            <person name="Lindblad-Toh K."/>
            <person name="Eichler E.E."/>
            <person name="Ponting C.P."/>
        </authorList>
    </citation>
    <scope>NUCLEOTIDE SEQUENCE [LARGE SCALE GENOMIC DNA]</scope>
    <source>
        <strain>C57BL/6J</strain>
    </source>
</reference>
<reference key="3">
    <citation type="journal article" date="2004" name="Genome Res.">
        <title>The status, quality, and expansion of the NIH full-length cDNA project: the Mammalian Gene Collection (MGC).</title>
        <authorList>
            <consortium name="The MGC Project Team"/>
        </authorList>
    </citation>
    <scope>NUCLEOTIDE SEQUENCE [LARGE SCALE MRNA]</scope>
    <source>
        <tissue>Brain</tissue>
        <tissue>Eye</tissue>
    </source>
</reference>
<reference key="4">
    <citation type="journal article" date="2009" name="Immunity">
        <title>The phagosomal proteome in interferon-gamma-activated macrophages.</title>
        <authorList>
            <person name="Trost M."/>
            <person name="English L."/>
            <person name="Lemieux S."/>
            <person name="Courcelles M."/>
            <person name="Desjardins M."/>
            <person name="Thibault P."/>
        </authorList>
    </citation>
    <scope>PHOSPHORYLATION [LARGE SCALE ANALYSIS] AT SER-114</scope>
    <scope>IDENTIFICATION BY MASS SPECTROMETRY [LARGE SCALE ANALYSIS]</scope>
</reference>
<reference key="5">
    <citation type="journal article" date="2010" name="Cell">
        <title>A tissue-specific atlas of mouse protein phosphorylation and expression.</title>
        <authorList>
            <person name="Huttlin E.L."/>
            <person name="Jedrychowski M.P."/>
            <person name="Elias J.E."/>
            <person name="Goswami T."/>
            <person name="Rad R."/>
            <person name="Beausoleil S.A."/>
            <person name="Villen J."/>
            <person name="Haas W."/>
            <person name="Sowa M.E."/>
            <person name="Gygi S.P."/>
        </authorList>
    </citation>
    <scope>PHOSPHORYLATION [LARGE SCALE ANALYSIS] AT SER-114 AND SER-202</scope>
    <scope>IDENTIFICATION BY MASS SPECTROMETRY [LARGE SCALE ANALYSIS]</scope>
    <source>
        <tissue>Brain</tissue>
        <tissue>Brown adipose tissue</tissue>
        <tissue>Heart</tissue>
        <tissue>Kidney</tissue>
        <tissue>Lung</tissue>
        <tissue>Pancreas</tissue>
        <tissue>Spleen</tissue>
        <tissue>Testis</tissue>
    </source>
</reference>
<protein>
    <recommendedName>
        <fullName>Sperm-associated antigen 7</fullName>
    </recommendedName>
</protein>
<comment type="subcellular location">
    <subcellularLocation>
        <location evidence="5">Nucleus</location>
    </subcellularLocation>
</comment>
<organism>
    <name type="scientific">Mus musculus</name>
    <name type="common">Mouse</name>
    <dbReference type="NCBI Taxonomy" id="10090"/>
    <lineage>
        <taxon>Eukaryota</taxon>
        <taxon>Metazoa</taxon>
        <taxon>Chordata</taxon>
        <taxon>Craniata</taxon>
        <taxon>Vertebrata</taxon>
        <taxon>Euteleostomi</taxon>
        <taxon>Mammalia</taxon>
        <taxon>Eutheria</taxon>
        <taxon>Euarchontoglires</taxon>
        <taxon>Glires</taxon>
        <taxon>Rodentia</taxon>
        <taxon>Myomorpha</taxon>
        <taxon>Muroidea</taxon>
        <taxon>Muridae</taxon>
        <taxon>Murinae</taxon>
        <taxon>Mus</taxon>
        <taxon>Mus</taxon>
    </lineage>
</organism>
<keyword id="KW-0007">Acetylation</keyword>
<keyword id="KW-0539">Nucleus</keyword>
<keyword id="KW-0597">Phosphoprotein</keyword>
<keyword id="KW-1185">Reference proteome</keyword>
<name>SPAG7_MOUSE</name>
<accession>Q7TNE3</accession>
<accession>Q3TM27</accession>
<accession>Q80XJ8</accession>
<accession>Q8BK16</accession>
<gene>
    <name type="primary">Spag7</name>
</gene>